<dbReference type="EMBL" id="JX073281">
    <property type="protein sequence ID" value="AFN20270.1"/>
    <property type="molecule type" value="mRNA"/>
</dbReference>
<dbReference type="RefSeq" id="NP_001257483.1">
    <property type="nucleotide sequence ID" value="NM_001270554.1"/>
</dbReference>
<dbReference type="SMR" id="I6V1W0"/>
<dbReference type="BioGRID" id="285729">
    <property type="interactions" value="1"/>
</dbReference>
<dbReference type="STRING" id="7955.ENSDARP00000126692"/>
<dbReference type="PaxDb" id="7955-ENSDARP00000126692"/>
<dbReference type="Ensembl" id="ENSDART00000152329">
    <property type="protein sequence ID" value="ENSDARP00000126692"/>
    <property type="gene ID" value="ENSDARG00000096603"/>
</dbReference>
<dbReference type="GeneID" id="559540"/>
<dbReference type="KEGG" id="dre:559540"/>
<dbReference type="AGR" id="ZFIN:ZDB-GENE-030131-5577"/>
<dbReference type="CTD" id="559540"/>
<dbReference type="ZFIN" id="ZDB-GENE-030131-5577">
    <property type="gene designation" value="bmb"/>
</dbReference>
<dbReference type="eggNOG" id="ENOG502QRBT">
    <property type="taxonomic scope" value="Eukaryota"/>
</dbReference>
<dbReference type="HOGENOM" id="CLU_027987_0_0_1"/>
<dbReference type="InParanoid" id="I6V1W0"/>
<dbReference type="OMA" id="DHSMSEF"/>
<dbReference type="OrthoDB" id="5978806at2759"/>
<dbReference type="PRO" id="PR:I6V1W0"/>
<dbReference type="Proteomes" id="UP000000437">
    <property type="component" value="Chromosome 25"/>
</dbReference>
<dbReference type="Bgee" id="ENSDARG00000096603">
    <property type="expression patterns" value="Expressed in mature ovarian follicle and 25 other cell types or tissues"/>
</dbReference>
<dbReference type="ExpressionAtlas" id="I6V1W0">
    <property type="expression patterns" value="baseline and differential"/>
</dbReference>
<dbReference type="GO" id="GO:0031965">
    <property type="term" value="C:nuclear membrane"/>
    <property type="evidence" value="ECO:0007669"/>
    <property type="project" value="UniProtKB-SubCell"/>
</dbReference>
<dbReference type="GO" id="GO:0061472">
    <property type="term" value="P:karyomere membrane fusion"/>
    <property type="evidence" value="ECO:0000315"/>
    <property type="project" value="ZFIN"/>
</dbReference>
<dbReference type="GO" id="GO:0007344">
    <property type="term" value="P:pronuclear fusion"/>
    <property type="evidence" value="ECO:0000315"/>
    <property type="project" value="UniProtKB"/>
</dbReference>
<dbReference type="InterPro" id="IPR040346">
    <property type="entry name" value="GEX1/Brambleberry"/>
</dbReference>
<dbReference type="PANTHER" id="PTHR33538:SF1">
    <property type="entry name" value="PROTEIN BRAMBLEBERRY"/>
    <property type="match status" value="1"/>
</dbReference>
<dbReference type="PANTHER" id="PTHR33538">
    <property type="entry name" value="PROTEIN GAMETE EXPRESSED 1"/>
    <property type="match status" value="1"/>
</dbReference>
<name>BMBL_DANRE</name>
<gene>
    <name type="primary">bmb</name>
</gene>
<comment type="function">
    <text evidence="3">Required for nuclear membrane fusion during karyogamy.</text>
</comment>
<comment type="subcellular location">
    <subcellularLocation>
        <location evidence="3">Nucleus membrane</location>
        <topology evidence="3">Multi-pass membrane protein</topology>
    </subcellularLocation>
    <text>During metaphase, localizes near the mitotic spindle region, and its localization shifts to the chromosomes as they reach the end of the spindle. During karyomere fusion, detected in prominent puncta, mainly at karyomere-karyomere interfaces corresponding to putative fusion sites.</text>
</comment>
<comment type="disruption phenotype">
    <text evidence="3">Embryos arrest development shortly after the midblastula transition. During cleavage (2-, 64-, and 1,000-cell-stage embryos) all blastomeres of mutant embryos contain morphologically abnormal nuclei that appeared fragmented in formation of multiple micronuclei.</text>
</comment>
<comment type="miscellaneous">
    <text evidence="4">Has a similar domain organization and 27% homology to yeast kar5.</text>
</comment>
<sequence>MALWFVLLWVSSLQYAEVEAFFDWLKKADPAPTPPPAESIVPILLHGEAPAFEMSVVDEKFLAEAKQMELSPLDSCHFRVVAQLKATCSGLSEEQLAKLGVALFNCQSEVEGRRTYPCTEEMSIKECTADMDSDTWNAYHIVSNRARSVCYATRQQHFRKRAELTVNALISTATSQLDAMKDLKEGQKELRDMTAASLDKLLEGHGALQIQQGALKEGQEQLDASISENLQRLAQEKALISTGQQLVAQLIQGITQRMENVSGQLKDQTAEVQEGHQAILEDLAVVRGSAQDIYEKMELNLNGFLQQQNTTAHFYTELMRKLELMNGTLGYMLTYLDNMQTRLEDRLHMIQGYLGWAGLSLRALWTCVMHAGYFLLCAVLLSFLQCTTFSRVTLLLSVPINAIAEINQQAALDLISLTLLLFTLSLGRWFVLQLLWALSKIKGRTCSRPPHLSIYPPKEKTPEKQHEFGEKCPASSSTPVQSDPVCDLEVESFMMGDPCVLGVSPSRCPPKFSHHHLGGTPNHSTPRLKSRHSIAATELDNIPQRNLGVFLETVNRSRSSSPNQSLASSSSFSGRSLCSGITRLGQPCKKRAVVGQDYCRVHEGGHTSYSRL</sequence>
<proteinExistence type="evidence at transcript level"/>
<feature type="signal peptide" evidence="1">
    <location>
        <begin position="1"/>
        <end position="20"/>
    </location>
</feature>
<feature type="chain" id="PRO_0000420971" description="Protein brambleberry">
    <location>
        <begin position="21"/>
        <end position="612"/>
    </location>
</feature>
<feature type="transmembrane region" description="Helical" evidence="1">
    <location>
        <begin position="364"/>
        <end position="384"/>
    </location>
</feature>
<feature type="transmembrane region" description="Helical" evidence="1">
    <location>
        <begin position="417"/>
        <end position="437"/>
    </location>
</feature>
<feature type="region of interest" description="Disordered" evidence="2">
    <location>
        <begin position="452"/>
        <end position="476"/>
    </location>
</feature>
<feature type="region of interest" description="Disordered" evidence="2">
    <location>
        <begin position="555"/>
        <end position="574"/>
    </location>
</feature>
<feature type="compositionally biased region" description="Basic and acidic residues" evidence="2">
    <location>
        <begin position="457"/>
        <end position="470"/>
    </location>
</feature>
<feature type="compositionally biased region" description="Low complexity" evidence="2">
    <location>
        <begin position="556"/>
        <end position="574"/>
    </location>
</feature>
<reference key="1">
    <citation type="journal article" date="2012" name="Cell">
        <title>Dynamic assembly of brambleberry mediates nuclear envelope fusion during early development.</title>
        <authorList>
            <person name="Abrams E.W."/>
            <person name="Zhang H."/>
            <person name="Marlow F.L."/>
            <person name="Kapp L."/>
            <person name="Lu S."/>
            <person name="Mullins M.C."/>
        </authorList>
    </citation>
    <scope>NUCLEOTIDE SEQUENCE [MRNA]</scope>
    <scope>SUBCELLULAR LOCATION</scope>
    <scope>FUNCTION</scope>
    <scope>DISRUPTION PHENOTYPE</scope>
    <source>
        <tissue>Ovary</tissue>
    </source>
</reference>
<protein>
    <recommendedName>
        <fullName>Protein brambleberry</fullName>
    </recommendedName>
</protein>
<evidence type="ECO:0000255" key="1"/>
<evidence type="ECO:0000256" key="2">
    <source>
        <dbReference type="SAM" id="MobiDB-lite"/>
    </source>
</evidence>
<evidence type="ECO:0000269" key="3">
    <source>
    </source>
</evidence>
<evidence type="ECO:0000305" key="4">
    <source>
    </source>
</evidence>
<organism>
    <name type="scientific">Danio rerio</name>
    <name type="common">Zebrafish</name>
    <name type="synonym">Brachydanio rerio</name>
    <dbReference type="NCBI Taxonomy" id="7955"/>
    <lineage>
        <taxon>Eukaryota</taxon>
        <taxon>Metazoa</taxon>
        <taxon>Chordata</taxon>
        <taxon>Craniata</taxon>
        <taxon>Vertebrata</taxon>
        <taxon>Euteleostomi</taxon>
        <taxon>Actinopterygii</taxon>
        <taxon>Neopterygii</taxon>
        <taxon>Teleostei</taxon>
        <taxon>Ostariophysi</taxon>
        <taxon>Cypriniformes</taxon>
        <taxon>Danionidae</taxon>
        <taxon>Danioninae</taxon>
        <taxon>Danio</taxon>
    </lineage>
</organism>
<keyword id="KW-0415">Karyogamy</keyword>
<keyword id="KW-0472">Membrane</keyword>
<keyword id="KW-0539">Nucleus</keyword>
<keyword id="KW-1185">Reference proteome</keyword>
<keyword id="KW-0732">Signal</keyword>
<keyword id="KW-0812">Transmembrane</keyword>
<keyword id="KW-1133">Transmembrane helix</keyword>
<accession>I6V1W0</accession>